<protein>
    <recommendedName>
        <fullName>Myosin heavy chain, striated muscle</fullName>
    </recommendedName>
</protein>
<comment type="function">
    <text>Muscle contraction.</text>
</comment>
<comment type="function">
    <text>Myosin is a protein that binds to F-actin and has ATPase activity that is activated by F-actin.</text>
</comment>
<comment type="subunit">
    <text>Muscle myosin is a hexameric protein that consists of 2 heavy chain subunits (MHC), 2 alkali light chain subunits (MLC) and 2 regulatory light chain subunits (MLC-2).</text>
</comment>
<comment type="subcellular location">
    <subcellularLocation>
        <location>Cytoplasm</location>
        <location>Myofibril</location>
    </subcellularLocation>
    <text>Thick filaments of the myofibrils.</text>
</comment>
<comment type="similarity">
    <text evidence="7">Belongs to the TRAFAC class myosin-kinesin ATPase superfamily. Myosin family.</text>
</comment>
<dbReference type="EMBL" id="X55714">
    <property type="protein sequence ID" value="CAA39247.1"/>
    <property type="molecule type" value="mRNA"/>
</dbReference>
<dbReference type="PIR" id="A40997">
    <property type="entry name" value="A40997"/>
</dbReference>
<dbReference type="RefSeq" id="XP_069125121.1">
    <property type="nucleotide sequence ID" value="XM_069269020.1"/>
</dbReference>
<dbReference type="PDB" id="1B7T">
    <property type="method" value="X-ray"/>
    <property type="resolution" value="2.50 A"/>
    <property type="chains" value="A=1-835"/>
</dbReference>
<dbReference type="PDB" id="1DFK">
    <property type="method" value="X-ray"/>
    <property type="resolution" value="4.20 A"/>
    <property type="chains" value="A=6-835"/>
</dbReference>
<dbReference type="PDB" id="1DFL">
    <property type="method" value="X-ray"/>
    <property type="resolution" value="4.20 A"/>
    <property type="chains" value="A/B=5-835"/>
</dbReference>
<dbReference type="PDB" id="1KK7">
    <property type="method" value="X-ray"/>
    <property type="resolution" value="3.20 A"/>
    <property type="chains" value="A=1-837"/>
</dbReference>
<dbReference type="PDB" id="1KK8">
    <property type="method" value="X-ray"/>
    <property type="resolution" value="2.30 A"/>
    <property type="chains" value="A=1-837"/>
</dbReference>
<dbReference type="PDB" id="1KQM">
    <property type="method" value="X-ray"/>
    <property type="resolution" value="3.00 A"/>
    <property type="chains" value="A=1-835"/>
</dbReference>
<dbReference type="PDB" id="1KWO">
    <property type="method" value="X-ray"/>
    <property type="resolution" value="3.80 A"/>
    <property type="chains" value="A=1-835"/>
</dbReference>
<dbReference type="PDB" id="1L2O">
    <property type="method" value="X-ray"/>
    <property type="resolution" value="2.80 A"/>
    <property type="chains" value="A=1-835"/>
</dbReference>
<dbReference type="PDB" id="1QVI">
    <property type="method" value="X-ray"/>
    <property type="resolution" value="2.54 A"/>
    <property type="chains" value="A=1-840"/>
</dbReference>
<dbReference type="PDB" id="1S5G">
    <property type="method" value="X-ray"/>
    <property type="resolution" value="3.10 A"/>
    <property type="chains" value="A=1-840"/>
</dbReference>
<dbReference type="PDB" id="1SCM">
    <property type="method" value="X-ray"/>
    <property type="resolution" value="2.80 A"/>
    <property type="chains" value="A=777-836"/>
</dbReference>
<dbReference type="PDB" id="1SR6">
    <property type="method" value="X-ray"/>
    <property type="resolution" value="2.75 A"/>
    <property type="chains" value="A=1-840"/>
</dbReference>
<dbReference type="PDB" id="1WDC">
    <property type="method" value="X-ray"/>
    <property type="resolution" value="2.00 A"/>
    <property type="chains" value="A=774-837"/>
</dbReference>
<dbReference type="PDB" id="2W4T">
    <property type="method" value="EM"/>
    <property type="resolution" value="35.00 A"/>
    <property type="chains" value="C=5-835"/>
</dbReference>
<dbReference type="PDB" id="2W4V">
    <property type="method" value="EM"/>
    <property type="resolution" value="35.00 A"/>
    <property type="chains" value="C=5-835"/>
</dbReference>
<dbReference type="PDB" id="2W4W">
    <property type="method" value="EM"/>
    <property type="resolution" value="35.00 A"/>
    <property type="chains" value="C=5-835"/>
</dbReference>
<dbReference type="PDB" id="3BAS">
    <property type="method" value="X-ray"/>
    <property type="resolution" value="2.30 A"/>
    <property type="chains" value="A/B=835-885"/>
</dbReference>
<dbReference type="PDB" id="3BAT">
    <property type="method" value="X-ray"/>
    <property type="resolution" value="2.30 A"/>
    <property type="chains" value="A/B/C/D=835-885"/>
</dbReference>
<dbReference type="PDB" id="3JTD">
    <property type="method" value="X-ray"/>
    <property type="resolution" value="2.57 A"/>
    <property type="chains" value="A=773-836"/>
</dbReference>
<dbReference type="PDB" id="3JVT">
    <property type="method" value="X-ray"/>
    <property type="resolution" value="2.10 A"/>
    <property type="chains" value="A=773-837"/>
</dbReference>
<dbReference type="PDBsum" id="1B7T"/>
<dbReference type="PDBsum" id="1DFK"/>
<dbReference type="PDBsum" id="1DFL"/>
<dbReference type="PDBsum" id="1KK7"/>
<dbReference type="PDBsum" id="1KK8"/>
<dbReference type="PDBsum" id="1KQM"/>
<dbReference type="PDBsum" id="1KWO"/>
<dbReference type="PDBsum" id="1L2O"/>
<dbReference type="PDBsum" id="1QVI"/>
<dbReference type="PDBsum" id="1S5G"/>
<dbReference type="PDBsum" id="1SCM"/>
<dbReference type="PDBsum" id="1SR6"/>
<dbReference type="PDBsum" id="1WDC"/>
<dbReference type="PDBsum" id="2W4T"/>
<dbReference type="PDBsum" id="2W4V"/>
<dbReference type="PDBsum" id="2W4W"/>
<dbReference type="PDBsum" id="3BAS"/>
<dbReference type="PDBsum" id="3BAT"/>
<dbReference type="PDBsum" id="3JTD"/>
<dbReference type="PDBsum" id="3JVT"/>
<dbReference type="SMR" id="P24733"/>
<dbReference type="GeneID" id="138324026"/>
<dbReference type="EvolutionaryTrace" id="P24733"/>
<dbReference type="GO" id="GO:0030016">
    <property type="term" value="C:myofibril"/>
    <property type="evidence" value="ECO:0007669"/>
    <property type="project" value="UniProtKB-SubCell"/>
</dbReference>
<dbReference type="GO" id="GO:0032982">
    <property type="term" value="C:myosin filament"/>
    <property type="evidence" value="ECO:0007669"/>
    <property type="project" value="UniProtKB-KW"/>
</dbReference>
<dbReference type="GO" id="GO:0016460">
    <property type="term" value="C:myosin II complex"/>
    <property type="evidence" value="ECO:0007669"/>
    <property type="project" value="TreeGrafter"/>
</dbReference>
<dbReference type="GO" id="GO:0051015">
    <property type="term" value="F:actin filament binding"/>
    <property type="evidence" value="ECO:0007669"/>
    <property type="project" value="InterPro"/>
</dbReference>
<dbReference type="GO" id="GO:0005524">
    <property type="term" value="F:ATP binding"/>
    <property type="evidence" value="ECO:0007669"/>
    <property type="project" value="UniProtKB-KW"/>
</dbReference>
<dbReference type="GO" id="GO:0005516">
    <property type="term" value="F:calmodulin binding"/>
    <property type="evidence" value="ECO:0007669"/>
    <property type="project" value="UniProtKB-KW"/>
</dbReference>
<dbReference type="GO" id="GO:0000146">
    <property type="term" value="F:microfilament motor activity"/>
    <property type="evidence" value="ECO:0007669"/>
    <property type="project" value="TreeGrafter"/>
</dbReference>
<dbReference type="CDD" id="cd01377">
    <property type="entry name" value="MYSc_class_II"/>
    <property type="match status" value="1"/>
</dbReference>
<dbReference type="FunFam" id="1.10.10.820:FF:000001">
    <property type="entry name" value="Myosin heavy chain"/>
    <property type="match status" value="1"/>
</dbReference>
<dbReference type="FunFam" id="1.20.5.370:FF:000001">
    <property type="entry name" value="Myosin heavy chain"/>
    <property type="match status" value="1"/>
</dbReference>
<dbReference type="FunFam" id="1.20.5.370:FF:000008">
    <property type="entry name" value="Myosin heavy chain"/>
    <property type="match status" value="1"/>
</dbReference>
<dbReference type="FunFam" id="1.20.58.530:FF:000001">
    <property type="entry name" value="Myosin heavy chain"/>
    <property type="match status" value="1"/>
</dbReference>
<dbReference type="FunFam" id="2.30.30.360:FF:000001">
    <property type="entry name" value="Myosin heavy chain"/>
    <property type="match status" value="1"/>
</dbReference>
<dbReference type="FunFam" id="1.20.5.4820:FF:000002">
    <property type="entry name" value="Myosin heavy chain 10"/>
    <property type="match status" value="1"/>
</dbReference>
<dbReference type="FunFam" id="1.20.5.340:FF:000021">
    <property type="entry name" value="Myosin heavy chain, isoform G"/>
    <property type="match status" value="1"/>
</dbReference>
<dbReference type="FunFam" id="1.20.5.340:FF:000025">
    <property type="entry name" value="Myosin heavy chain, isoform G"/>
    <property type="match status" value="1"/>
</dbReference>
<dbReference type="FunFam" id="1.20.5.370:FF:000009">
    <property type="entry name" value="Myosin heavy chain, isoform G"/>
    <property type="match status" value="1"/>
</dbReference>
<dbReference type="FunFam" id="1.20.5.370:FF:000010">
    <property type="entry name" value="Myosin heavy chain, isoform G"/>
    <property type="match status" value="1"/>
</dbReference>
<dbReference type="FunFam" id="3.40.850.10:FF:000024">
    <property type="entry name" value="Myosin heavy chain, isoform J"/>
    <property type="match status" value="1"/>
</dbReference>
<dbReference type="FunFam" id="1.20.120.720:FF:000001">
    <property type="entry name" value="Myosin heavy chain, muscle"/>
    <property type="match status" value="1"/>
</dbReference>
<dbReference type="Gene3D" id="1.10.10.820">
    <property type="match status" value="1"/>
</dbReference>
<dbReference type="Gene3D" id="1.20.5.340">
    <property type="match status" value="5"/>
</dbReference>
<dbReference type="Gene3D" id="1.20.5.370">
    <property type="match status" value="3"/>
</dbReference>
<dbReference type="Gene3D" id="1.20.5.4820">
    <property type="match status" value="1"/>
</dbReference>
<dbReference type="Gene3D" id="1.20.58.530">
    <property type="match status" value="1"/>
</dbReference>
<dbReference type="Gene3D" id="3.40.850.10">
    <property type="entry name" value="Kinesin motor domain"/>
    <property type="match status" value="1"/>
</dbReference>
<dbReference type="Gene3D" id="2.30.30.360">
    <property type="entry name" value="Myosin S1 fragment, N-terminal"/>
    <property type="match status" value="1"/>
</dbReference>
<dbReference type="Gene3D" id="1.20.120.720">
    <property type="entry name" value="Myosin VI head, motor domain, U50 subdomain"/>
    <property type="match status" value="1"/>
</dbReference>
<dbReference type="InterPro" id="IPR000048">
    <property type="entry name" value="IQ_motif_EF-hand-BS"/>
</dbReference>
<dbReference type="InterPro" id="IPR036961">
    <property type="entry name" value="Kinesin_motor_dom_sf"/>
</dbReference>
<dbReference type="InterPro" id="IPR001609">
    <property type="entry name" value="Myosin_head_motor_dom-like"/>
</dbReference>
<dbReference type="InterPro" id="IPR004009">
    <property type="entry name" value="Myosin_N"/>
</dbReference>
<dbReference type="InterPro" id="IPR008989">
    <property type="entry name" value="Myosin_S1_N"/>
</dbReference>
<dbReference type="InterPro" id="IPR002928">
    <property type="entry name" value="Myosin_tail"/>
</dbReference>
<dbReference type="InterPro" id="IPR027417">
    <property type="entry name" value="P-loop_NTPase"/>
</dbReference>
<dbReference type="InterPro" id="IPR014751">
    <property type="entry name" value="XRCC4-like_C"/>
</dbReference>
<dbReference type="PANTHER" id="PTHR45615:SF27">
    <property type="entry name" value="MYOSIN HEAVY CHAIN, MUSCLE"/>
    <property type="match status" value="1"/>
</dbReference>
<dbReference type="PANTHER" id="PTHR45615">
    <property type="entry name" value="MYOSIN HEAVY CHAIN, NON-MUSCLE"/>
    <property type="match status" value="1"/>
</dbReference>
<dbReference type="Pfam" id="PF00063">
    <property type="entry name" value="Myosin_head"/>
    <property type="match status" value="1"/>
</dbReference>
<dbReference type="Pfam" id="PF02736">
    <property type="entry name" value="Myosin_N"/>
    <property type="match status" value="1"/>
</dbReference>
<dbReference type="Pfam" id="PF01576">
    <property type="entry name" value="Myosin_tail_1"/>
    <property type="match status" value="1"/>
</dbReference>
<dbReference type="PRINTS" id="PR00193">
    <property type="entry name" value="MYOSINHEAVY"/>
</dbReference>
<dbReference type="SMART" id="SM00015">
    <property type="entry name" value="IQ"/>
    <property type="match status" value="1"/>
</dbReference>
<dbReference type="SMART" id="SM00242">
    <property type="entry name" value="MYSc"/>
    <property type="match status" value="1"/>
</dbReference>
<dbReference type="SUPFAM" id="SSF90257">
    <property type="entry name" value="Myosin rod fragments"/>
    <property type="match status" value="6"/>
</dbReference>
<dbReference type="SUPFAM" id="SSF52540">
    <property type="entry name" value="P-loop containing nucleoside triphosphate hydrolases"/>
    <property type="match status" value="1"/>
</dbReference>
<dbReference type="PROSITE" id="PS50096">
    <property type="entry name" value="IQ"/>
    <property type="match status" value="1"/>
</dbReference>
<dbReference type="PROSITE" id="PS51456">
    <property type="entry name" value="MYOSIN_MOTOR"/>
    <property type="match status" value="1"/>
</dbReference>
<dbReference type="PROSITE" id="PS51844">
    <property type="entry name" value="SH3_LIKE"/>
    <property type="match status" value="1"/>
</dbReference>
<sequence>MNIDFSDPDFQYLAVDRKKLMKEQTAAFDGKKNCWVPDEKEGFASAEIQSSKGDEITVKIVADSSTRTVKKDDIQSMNPPKFEKLEDMANMTYLNEASVLYNLRSRYTSGLIYTYSGLFCIAVNPYRRLPIYTDSVIAKYRGKRKTEIPPHLFSVADNAYQNMVTDRENQSCLITGESGAGKTENTKKVIMYLAKVACAVKKKDEEASDKKEGSLEDQIIQANPVLEAYGNAKTTRNNNSSRFGKFIRIHFGPTGKIAGADIETYLLEKSRVTYQQSAERNYHIFYQICSNAIPELNDVMLVTPDSGLYSFINQGCLTVDNIDDVEEFKLCDEAFDILGFTKEEKQSMFKCTASILHMGEMKFKQRPREEQAESDGTAEAEKVAFLCGINAGDLLKALLKPKVKVGTEMVTKGQNMNQVVNSVGALAKSLYDRMFNWLVRRVNKTLDTKAKRNYYIGVLDIAGFEIFDFNSFEQLCINYTNERLQQFFNHHMFILEQEEYKKEGIAWEFIDFGMDLQMCIDLIEKPMGILSILEEECMFPKADDKSFQDKLYQNHMGKNRMFTKPGKPTRPNQGPAHFELHHYAGNVPYSITGWLEKNKDPINENVVALLGASKEPLVAELFKAPEEPAGGGKKKKGKSSAFQTISAVHRESLNKLMKNLYSTHPHFVRCIIPNELKQPGLVDAELVLHQLQCNGVLEGIRICRKGFPSRLIYSEFKQRYSILAPNAIPQGFVDGKTVSEKILAGLQMDPAEYRLGTTKVFFKAGVLGNLEEMRDERLSKIISMFQAHIRGYLIRKAYKKLQDQRIGLSVIQRNIRKWLVLRNWQWWKLYSKVKPLLSIARQEEEMKEQLKQMDKMKEDLAKTERIKKELEEQNVTLLEQKNDLFLQLQTLEDSMGDQEERVEKLIMQKADFESQIKELEERLLDEEDAAADLEGIKKKMEADNANLKKDIGDLENTLQKAEQDKAHKDNQISTLQGEISQQDEHIGKLNKEKKALEEANKKTSDSLQAEEDKCNHLNKLKAKLEQALDELEDNLEREKKVRGDVEKAKRKVEQDLKSTQENVEDLERVKRELEENVRRKEAEISSLNSKLEDEQNLVSQLQRKIKELQARIEELEEELEAERNARAKVEKQRAELNRELEELGERLDEAGGATSAQIELNKKREAELLKIRRDLEEASLQHEAQISALRKKHQDAANEMADQVDQLQKVKSKLEKDKKDLKREMDDLESQMTHNMKNKGCSEKVMKQFESQMSDLNARLEDSQRSINELQSQKSRLQAENSDLTRQLEDAEHRVSVLSKEKSQLSSQLEDARRSLEEETRARSKLQNEVRNMHADMDAIREQLEEEQESKSDVQRQLSKANNEIQQWRSKFESEGANRTEELEDQKRKLLGKLSEAEQTTEAANAKCSALEKAKSRLQQELEDMSIEVDRANASVNQMEKKQRAFDKTTAEWQAKVNSLQSELENSQKESRGYSAELYRIKASIEEYQDSIGALRRENKNLADEIHDLTDQLSEGGRSTHELDKARRRLEMEKEELQAALEEAEGALEQEEAKVMRAQLEIATVRNEIDKRIQEKEEEFDNTRRNHQRALESMQASLEAEAKGKADAMRIKKKLEQDINELEVALDASNRGKAEMEKTVKRYQQQIREMQTSIEEEQRQRDEARESYNMAERRCTLMSGEVEELRAALEQAERARKASDNELADANDRVNELTSQVSSVQGQKRKLEGDINAMQTDLDEMHGELKGADERCKKAMADAARLADELRAEQDHSNQVEKVRKNLESQVKEFQIRLDEAEASSLKGGKKMIQKLESRVHELEAELDNEQRRHAETQKNMRKADRRLKELAFQADEDRKNQERLQELIDKLNAKIKTFKRQVEEAEEIAAINLAKYRKAQHELEEAEERADTADSTLQKFRAKSRSSVSVQRSSVSVSASN</sequence>
<organism>
    <name type="scientific">Argopecten irradians</name>
    <name type="common">Bay scallop</name>
    <name type="synonym">Aequipecten irradians</name>
    <dbReference type="NCBI Taxonomy" id="31199"/>
    <lineage>
        <taxon>Eukaryota</taxon>
        <taxon>Metazoa</taxon>
        <taxon>Spiralia</taxon>
        <taxon>Lophotrochozoa</taxon>
        <taxon>Mollusca</taxon>
        <taxon>Bivalvia</taxon>
        <taxon>Autobranchia</taxon>
        <taxon>Pteriomorphia</taxon>
        <taxon>Pectinida</taxon>
        <taxon>Pectinoidea</taxon>
        <taxon>Pectinidae</taxon>
        <taxon>Argopecten</taxon>
    </lineage>
</organism>
<accession>P24733</accession>
<feature type="chain" id="PRO_0000123384" description="Myosin heavy chain, striated muscle">
    <location>
        <begin position="1"/>
        <end position="1938"/>
    </location>
</feature>
<feature type="domain" description="Myosin N-terminal SH3-like" evidence="5">
    <location>
        <begin position="29"/>
        <end position="79"/>
    </location>
</feature>
<feature type="domain" description="Myosin motor" evidence="4">
    <location>
        <begin position="83"/>
        <end position="775"/>
    </location>
</feature>
<feature type="domain" description="IQ" evidence="3">
    <location>
        <begin position="778"/>
        <end position="805"/>
    </location>
</feature>
<feature type="region of interest" description="Actin-binding" evidence="4">
    <location>
        <begin position="653"/>
        <end position="675"/>
    </location>
</feature>
<feature type="region of interest" description="Rodlike tail (S2 and LMM domains)">
    <location>
        <begin position="836"/>
        <end position="1938"/>
    </location>
</feature>
<feature type="region of interest" description="Disordered" evidence="6">
    <location>
        <begin position="1041"/>
        <end position="1062"/>
    </location>
</feature>
<feature type="region of interest" description="Disordered" evidence="6">
    <location>
        <begin position="1187"/>
        <end position="1332"/>
    </location>
</feature>
<feature type="region of interest" description="Disordered" evidence="6">
    <location>
        <begin position="1344"/>
        <end position="1363"/>
    </location>
</feature>
<feature type="region of interest" description="Disordered" evidence="6">
    <location>
        <begin position="1898"/>
        <end position="1938"/>
    </location>
</feature>
<feature type="coiled-coil region" evidence="2">
    <location>
        <begin position="836"/>
        <end position="1938"/>
    </location>
</feature>
<feature type="compositionally biased region" description="Basic and acidic residues" evidence="6">
    <location>
        <begin position="1041"/>
        <end position="1058"/>
    </location>
</feature>
<feature type="compositionally biased region" description="Basic and acidic residues" evidence="6">
    <location>
        <begin position="1212"/>
        <end position="1225"/>
    </location>
</feature>
<feature type="compositionally biased region" description="Polar residues" evidence="6">
    <location>
        <begin position="1265"/>
        <end position="1285"/>
    </location>
</feature>
<feature type="compositionally biased region" description="Basic and acidic residues" evidence="6">
    <location>
        <begin position="1286"/>
        <end position="1303"/>
    </location>
</feature>
<feature type="compositionally biased region" description="Basic and acidic residues" evidence="6">
    <location>
        <begin position="1310"/>
        <end position="1332"/>
    </location>
</feature>
<feature type="compositionally biased region" description="Basic and acidic residues" evidence="6">
    <location>
        <begin position="1344"/>
        <end position="1354"/>
    </location>
</feature>
<feature type="compositionally biased region" description="Low complexity" evidence="6">
    <location>
        <begin position="1922"/>
        <end position="1938"/>
    </location>
</feature>
<feature type="binding site" evidence="1">
    <location>
        <begin position="176"/>
        <end position="183"/>
    </location>
    <ligand>
        <name>ATP</name>
        <dbReference type="ChEBI" id="CHEBI:30616"/>
    </ligand>
</feature>
<feature type="helix" evidence="9">
    <location>
        <begin position="8"/>
        <end position="10"/>
    </location>
</feature>
<feature type="turn" evidence="9">
    <location>
        <begin position="11"/>
        <end position="13"/>
    </location>
</feature>
<feature type="strand" evidence="9">
    <location>
        <begin position="17"/>
        <end position="20"/>
    </location>
</feature>
<feature type="strand" evidence="11">
    <location>
        <begin position="21"/>
        <end position="26"/>
    </location>
</feature>
<feature type="turn" evidence="9">
    <location>
        <begin position="30"/>
        <end position="32"/>
    </location>
</feature>
<feature type="strand" evidence="9">
    <location>
        <begin position="33"/>
        <end position="38"/>
    </location>
</feature>
<feature type="turn" evidence="9">
    <location>
        <begin position="39"/>
        <end position="41"/>
    </location>
</feature>
<feature type="strand" evidence="9">
    <location>
        <begin position="42"/>
        <end position="52"/>
    </location>
</feature>
<feature type="strand" evidence="9">
    <location>
        <begin position="55"/>
        <end position="60"/>
    </location>
</feature>
<feature type="turn" evidence="9">
    <location>
        <begin position="61"/>
        <end position="63"/>
    </location>
</feature>
<feature type="strand" evidence="9">
    <location>
        <begin position="66"/>
        <end position="70"/>
    </location>
</feature>
<feature type="helix" evidence="9">
    <location>
        <begin position="71"/>
        <end position="73"/>
    </location>
</feature>
<feature type="helix" evidence="9">
    <location>
        <begin position="80"/>
        <end position="82"/>
    </location>
</feature>
<feature type="helix" evidence="9">
    <location>
        <begin position="88"/>
        <end position="90"/>
    </location>
</feature>
<feature type="strand" evidence="8">
    <location>
        <begin position="91"/>
        <end position="93"/>
    </location>
</feature>
<feature type="helix" evidence="9">
    <location>
        <begin position="96"/>
        <end position="108"/>
    </location>
</feature>
<feature type="strand" evidence="9">
    <location>
        <begin position="113"/>
        <end position="116"/>
    </location>
</feature>
<feature type="strand" evidence="9">
    <location>
        <begin position="119"/>
        <end position="123"/>
    </location>
</feature>
<feature type="helix" evidence="12">
    <location>
        <begin position="130"/>
        <end position="132"/>
    </location>
</feature>
<feature type="helix" evidence="9">
    <location>
        <begin position="134"/>
        <end position="140"/>
    </location>
</feature>
<feature type="helix" evidence="9">
    <location>
        <begin position="145"/>
        <end position="147"/>
    </location>
</feature>
<feature type="helix" evidence="9">
    <location>
        <begin position="152"/>
        <end position="166"/>
    </location>
</feature>
<feature type="strand" evidence="9">
    <location>
        <begin position="168"/>
        <end position="175"/>
    </location>
</feature>
<feature type="strand" evidence="10">
    <location>
        <begin position="177"/>
        <end position="181"/>
    </location>
</feature>
<feature type="helix" evidence="9">
    <location>
        <begin position="182"/>
        <end position="196"/>
    </location>
</feature>
<feature type="turn" evidence="8">
    <location>
        <begin position="206"/>
        <end position="208"/>
    </location>
</feature>
<feature type="helix" evidence="9">
    <location>
        <begin position="215"/>
        <end position="230"/>
    </location>
</feature>
<feature type="strand" evidence="10">
    <location>
        <begin position="231"/>
        <end position="234"/>
    </location>
</feature>
<feature type="strand" evidence="9">
    <location>
        <begin position="240"/>
        <end position="251"/>
    </location>
</feature>
<feature type="strand" evidence="9">
    <location>
        <begin position="255"/>
        <end position="265"/>
    </location>
</feature>
<feature type="helix" evidence="9">
    <location>
        <begin position="269"/>
        <end position="272"/>
    </location>
</feature>
<feature type="helix" evidence="9">
    <location>
        <begin position="283"/>
        <end position="288"/>
    </location>
</feature>
<feature type="turn" evidence="8">
    <location>
        <begin position="289"/>
        <end position="291"/>
    </location>
</feature>
<feature type="helix" evidence="9">
    <location>
        <begin position="294"/>
        <end position="296"/>
    </location>
</feature>
<feature type="helix" evidence="9">
    <location>
        <begin position="297"/>
        <end position="300"/>
    </location>
</feature>
<feature type="helix" evidence="9">
    <location>
        <begin position="306"/>
        <end position="308"/>
    </location>
</feature>
<feature type="turn" evidence="9">
    <location>
        <begin position="310"/>
        <end position="312"/>
    </location>
</feature>
<feature type="strand" evidence="12">
    <location>
        <begin position="313"/>
        <end position="315"/>
    </location>
</feature>
<feature type="helix" evidence="9">
    <location>
        <begin position="324"/>
        <end position="337"/>
    </location>
</feature>
<feature type="helix" evidence="9">
    <location>
        <begin position="342"/>
        <end position="358"/>
    </location>
</feature>
<feature type="strand" evidence="11">
    <location>
        <begin position="367"/>
        <end position="369"/>
    </location>
</feature>
<feature type="strand" evidence="9">
    <location>
        <begin position="373"/>
        <end position="375"/>
    </location>
</feature>
<feature type="helix" evidence="9">
    <location>
        <begin position="378"/>
        <end position="387"/>
    </location>
</feature>
<feature type="helix" evidence="9">
    <location>
        <begin position="391"/>
        <end position="399"/>
    </location>
</feature>
<feature type="strand" evidence="11">
    <location>
        <begin position="405"/>
        <end position="407"/>
    </location>
</feature>
<feature type="helix" evidence="9">
    <location>
        <begin position="416"/>
        <end position="446"/>
    </location>
</feature>
<feature type="strand" evidence="9">
    <location>
        <begin position="454"/>
        <end position="460"/>
    </location>
</feature>
<feature type="strand" evidence="9">
    <location>
        <begin position="468"/>
        <end position="470"/>
    </location>
</feature>
<feature type="helix" evidence="9">
    <location>
        <begin position="472"/>
        <end position="502"/>
    </location>
</feature>
<feature type="helix" evidence="9">
    <location>
        <begin position="514"/>
        <end position="524"/>
    </location>
</feature>
<feature type="helix" evidence="9">
    <location>
        <begin position="529"/>
        <end position="536"/>
    </location>
</feature>
<feature type="helix" evidence="9">
    <location>
        <begin position="544"/>
        <end position="555"/>
    </location>
</feature>
<feature type="turn" evidence="9">
    <location>
        <begin position="556"/>
        <end position="558"/>
    </location>
</feature>
<feature type="strand" evidence="9">
    <location>
        <begin position="560"/>
        <end position="563"/>
    </location>
</feature>
<feature type="strand" evidence="11">
    <location>
        <begin position="570"/>
        <end position="572"/>
    </location>
</feature>
<feature type="strand" evidence="9">
    <location>
        <begin position="577"/>
        <end position="582"/>
    </location>
</feature>
<feature type="strand" evidence="9">
    <location>
        <begin position="585"/>
        <end position="589"/>
    </location>
</feature>
<feature type="helix" evidence="9">
    <location>
        <begin position="594"/>
        <end position="598"/>
    </location>
</feature>
<feature type="helix" evidence="9">
    <location>
        <begin position="604"/>
        <end position="611"/>
    </location>
</feature>
<feature type="helix" evidence="9">
    <location>
        <begin position="616"/>
        <end position="621"/>
    </location>
</feature>
<feature type="helix" evidence="9">
    <location>
        <begin position="645"/>
        <end position="660"/>
    </location>
</feature>
<feature type="strand" evidence="9">
    <location>
        <begin position="663"/>
        <end position="671"/>
    </location>
</feature>
<feature type="helix" evidence="9">
    <location>
        <begin position="684"/>
        <end position="691"/>
    </location>
</feature>
<feature type="strand" evidence="9">
    <location>
        <begin position="694"/>
        <end position="696"/>
    </location>
</feature>
<feature type="helix" evidence="8">
    <location>
        <begin position="700"/>
        <end position="704"/>
    </location>
</feature>
<feature type="strand" evidence="9">
    <location>
        <begin position="709"/>
        <end position="712"/>
    </location>
</feature>
<feature type="helix" evidence="9">
    <location>
        <begin position="713"/>
        <end position="720"/>
    </location>
</feature>
<feature type="helix" evidence="9">
    <location>
        <begin position="721"/>
        <end position="723"/>
    </location>
</feature>
<feature type="helix" evidence="9">
    <location>
        <begin position="725"/>
        <end position="727"/>
    </location>
</feature>
<feature type="helix" evidence="9">
    <location>
        <begin position="735"/>
        <end position="746"/>
    </location>
</feature>
<feature type="helix" evidence="9">
    <location>
        <begin position="750"/>
        <end position="752"/>
    </location>
</feature>
<feature type="strand" evidence="9">
    <location>
        <begin position="753"/>
        <end position="755"/>
    </location>
</feature>
<feature type="strand" evidence="9">
    <location>
        <begin position="757"/>
        <end position="762"/>
    </location>
</feature>
<feature type="helix" evidence="13">
    <location>
        <begin position="776"/>
        <end position="822"/>
    </location>
</feature>
<feature type="helix" evidence="13">
    <location>
        <begin position="825"/>
        <end position="833"/>
    </location>
</feature>
<feature type="turn" evidence="13">
    <location>
        <begin position="834"/>
        <end position="836"/>
    </location>
</feature>
<feature type="helix" evidence="14">
    <location>
        <begin position="841"/>
        <end position="885"/>
    </location>
</feature>
<name>MYS_ARGIR</name>
<evidence type="ECO:0000250" key="1"/>
<evidence type="ECO:0000255" key="2"/>
<evidence type="ECO:0000255" key="3">
    <source>
        <dbReference type="PROSITE-ProRule" id="PRU00116"/>
    </source>
</evidence>
<evidence type="ECO:0000255" key="4">
    <source>
        <dbReference type="PROSITE-ProRule" id="PRU00782"/>
    </source>
</evidence>
<evidence type="ECO:0000255" key="5">
    <source>
        <dbReference type="PROSITE-ProRule" id="PRU01190"/>
    </source>
</evidence>
<evidence type="ECO:0000256" key="6">
    <source>
        <dbReference type="SAM" id="MobiDB-lite"/>
    </source>
</evidence>
<evidence type="ECO:0000305" key="7"/>
<evidence type="ECO:0007829" key="8">
    <source>
        <dbReference type="PDB" id="1KK7"/>
    </source>
</evidence>
<evidence type="ECO:0007829" key="9">
    <source>
        <dbReference type="PDB" id="1KK8"/>
    </source>
</evidence>
<evidence type="ECO:0007829" key="10">
    <source>
        <dbReference type="PDB" id="1L2O"/>
    </source>
</evidence>
<evidence type="ECO:0007829" key="11">
    <source>
        <dbReference type="PDB" id="1QVI"/>
    </source>
</evidence>
<evidence type="ECO:0007829" key="12">
    <source>
        <dbReference type="PDB" id="1SR6"/>
    </source>
</evidence>
<evidence type="ECO:0007829" key="13">
    <source>
        <dbReference type="PDB" id="1WDC"/>
    </source>
</evidence>
<evidence type="ECO:0007829" key="14">
    <source>
        <dbReference type="PDB" id="3BAS"/>
    </source>
</evidence>
<keyword id="KW-0002">3D-structure</keyword>
<keyword id="KW-0009">Actin-binding</keyword>
<keyword id="KW-0067">ATP-binding</keyword>
<keyword id="KW-0112">Calmodulin-binding</keyword>
<keyword id="KW-0175">Coiled coil</keyword>
<keyword id="KW-0963">Cytoplasm</keyword>
<keyword id="KW-0505">Motor protein</keyword>
<keyword id="KW-0514">Muscle protein</keyword>
<keyword id="KW-0518">Myosin</keyword>
<keyword id="KW-0547">Nucleotide-binding</keyword>
<keyword id="KW-0787">Thick filament</keyword>
<reference key="1">
    <citation type="journal article" date="1991" name="J. Biol. Chem.">
        <title>Complete primary structure of a scallop striated muscle myosin heavy chain. Sequence comparison with other heavy chains reveals regions that might be critical for regulation.</title>
        <authorList>
            <person name="Nyitray L."/>
            <person name="Goodwin E.B."/>
            <person name="Szent-Gyorgyi A.G."/>
        </authorList>
    </citation>
    <scope>NUCLEOTIDE SEQUENCE [MRNA]</scope>
    <source>
        <tissue>Adductor muscle</tissue>
    </source>
</reference>
<reference key="2">
    <citation type="journal article" date="1990" name="Nucleic Acids Res.">
        <title>Nucleotide sequence of full length cDNA for a scallop striated muscle myosin heavy chain.</title>
        <authorList>
            <person name="Nyitray L."/>
            <person name="Goodwin E.B."/>
            <person name="Szent-Gyorgyi A.G."/>
        </authorList>
    </citation>
    <scope>NUCLEOTIDE SEQUENCE [MRNA]</scope>
    <source>
        <tissue>Adductor muscle</tissue>
    </source>
</reference>
<reference key="3">
    <citation type="journal article" date="1994" name="Nature">
        <title>Structure of the regulatory domain of scallop myosin at 2.8-A resolution.</title>
        <authorList>
            <person name="Xie X."/>
            <person name="Harrison D.H."/>
            <person name="Schlichting I."/>
            <person name="Sweet R.M."/>
            <person name="Kalabokis V.N."/>
            <person name="Szent-Gyorgyi A.G."/>
            <person name="Cohen C."/>
        </authorList>
    </citation>
    <scope>X-RAY CRYSTALLOGRAPHY (2.8 ANGSTROMS) OF 777-836</scope>
</reference>
<reference key="4">
    <citation type="journal article" date="1996" name="Structure">
        <title>Structure of the regulatory domain of scallop myosin at 2-A resolution: implications for regulation.</title>
        <authorList>
            <person name="Houdusse A."/>
            <person name="Cohen C."/>
        </authorList>
    </citation>
    <scope>X-RAY CRYSTALLOGRAPHY (2.0 ANGSTROMS) OF 777-836</scope>
</reference>
<proteinExistence type="evidence at protein level"/>